<sequence length="37" mass="3914">PHAFPFLTPEQKKELSDIAHKIVAPGKGILAADESTG</sequence>
<dbReference type="EC" id="4.1.2.13" evidence="1"/>
<dbReference type="SMR" id="P86979"/>
<dbReference type="Allergome" id="10154">
    <property type="allergen name" value="Thu a 3"/>
</dbReference>
<dbReference type="Allergome" id="10155">
    <property type="allergen name" value="Thu a 3.0101"/>
</dbReference>
<dbReference type="UniPathway" id="UPA00109">
    <property type="reaction ID" value="UER00183"/>
</dbReference>
<dbReference type="GO" id="GO:0004332">
    <property type="term" value="F:fructose-bisphosphate aldolase activity"/>
    <property type="evidence" value="ECO:0007669"/>
    <property type="project" value="UniProtKB-EC"/>
</dbReference>
<dbReference type="GO" id="GO:0006096">
    <property type="term" value="P:glycolytic process"/>
    <property type="evidence" value="ECO:0007669"/>
    <property type="project" value="UniProtKB-UniPathway"/>
</dbReference>
<dbReference type="Gene3D" id="3.20.20.70">
    <property type="entry name" value="Aldolase class I"/>
    <property type="match status" value="1"/>
</dbReference>
<dbReference type="InterPro" id="IPR013785">
    <property type="entry name" value="Aldolase_TIM"/>
</dbReference>
<dbReference type="InterPro" id="IPR000741">
    <property type="entry name" value="FBA_I"/>
</dbReference>
<dbReference type="Pfam" id="PF00274">
    <property type="entry name" value="Glycolytic"/>
    <property type="match status" value="1"/>
</dbReference>
<dbReference type="SUPFAM" id="SSF51569">
    <property type="entry name" value="Aldolase"/>
    <property type="match status" value="1"/>
</dbReference>
<name>ALDOA_THUAL</name>
<evidence type="ECO:0000250" key="1">
    <source>
        <dbReference type="UniProtKB" id="P00883"/>
    </source>
</evidence>
<evidence type="ECO:0000250" key="2">
    <source>
        <dbReference type="UniProtKB" id="P04075"/>
    </source>
</evidence>
<evidence type="ECO:0000255" key="3"/>
<evidence type="ECO:0000269" key="4">
    <source>
    </source>
</evidence>
<evidence type="ECO:0000303" key="5">
    <source>
    </source>
</evidence>
<evidence type="ECO:0000305" key="6"/>
<feature type="chain" id="PRO_0000425074" description="Fructose-bisphosphate aldolase A">
    <location>
        <begin position="1"/>
        <end position="37" status="greater than"/>
    </location>
</feature>
<feature type="non-terminal residue" evidence="5">
    <location>
        <position position="37"/>
    </location>
</feature>
<accession>P86979</accession>
<keyword id="KW-0020">Allergen</keyword>
<keyword id="KW-0903">Direct protein sequencing</keyword>
<keyword id="KW-0324">Glycolysis</keyword>
<keyword id="KW-0456">Lyase</keyword>
<organism>
    <name type="scientific">Thunnus albacares</name>
    <name type="common">Yellowfin tuna</name>
    <name type="synonym">Neothunnus macropterus</name>
    <dbReference type="NCBI Taxonomy" id="8236"/>
    <lineage>
        <taxon>Eukaryota</taxon>
        <taxon>Metazoa</taxon>
        <taxon>Chordata</taxon>
        <taxon>Craniata</taxon>
        <taxon>Vertebrata</taxon>
        <taxon>Euteleostomi</taxon>
        <taxon>Actinopterygii</taxon>
        <taxon>Neopterygii</taxon>
        <taxon>Teleostei</taxon>
        <taxon>Neoteleostei</taxon>
        <taxon>Acanthomorphata</taxon>
        <taxon>Pelagiaria</taxon>
        <taxon>Scombriformes</taxon>
        <taxon>Scombridae</taxon>
        <taxon>Thunnus</taxon>
    </lineage>
</organism>
<gene>
    <name evidence="1" type="primary">ALDOA</name>
</gene>
<reference evidence="6" key="1">
    <citation type="journal article" date="2013" name="Clin. Exp. Allergy">
        <title>Identification of enolases and aldolases as important fish allergens in cod, salmon and tuna: component resolved diagnosis using parvalbumin and the new allergens.</title>
        <authorList>
            <person name="Kuehn A."/>
            <person name="Hilger C."/>
            <person name="Lehners-Weber C."/>
            <person name="Codreanu-Morel F."/>
            <person name="Morisset M."/>
            <person name="Metz-Favre C."/>
            <person name="Pauli G."/>
            <person name="de Blay F."/>
            <person name="Revets D."/>
            <person name="Muller C.P."/>
            <person name="Vogel L."/>
            <person name="Vieths S."/>
            <person name="Hentges F."/>
        </authorList>
    </citation>
    <scope>PROTEIN SEQUENCE</scope>
    <scope>ALLERGEN</scope>
    <scope>IDENTIFICATION BY MASS SPECTROMETRY</scope>
    <source>
        <tissue evidence="4">Muscle</tissue>
    </source>
</reference>
<proteinExistence type="evidence at protein level"/>
<protein>
    <recommendedName>
        <fullName evidence="5">Fructose-bisphosphate aldolase A</fullName>
        <ecNumber evidence="1">4.1.2.13</ecNumber>
    </recommendedName>
    <alternativeName>
        <fullName evidence="1">Muscle-type aldolase</fullName>
    </alternativeName>
    <allergenName evidence="5">Thu a 3.0101</allergenName>
</protein>
<comment type="function">
    <text evidence="1">Plays a key role in glycolysis and gluconeogenesis.</text>
</comment>
<comment type="catalytic activity">
    <reaction evidence="2">
        <text>beta-D-fructose 1,6-bisphosphate = D-glyceraldehyde 3-phosphate + dihydroxyacetone phosphate</text>
        <dbReference type="Rhea" id="RHEA:14729"/>
        <dbReference type="ChEBI" id="CHEBI:32966"/>
        <dbReference type="ChEBI" id="CHEBI:57642"/>
        <dbReference type="ChEBI" id="CHEBI:59776"/>
        <dbReference type="EC" id="4.1.2.13"/>
    </reaction>
    <physiologicalReaction direction="left-to-right" evidence="2">
        <dbReference type="Rhea" id="RHEA:14730"/>
    </physiologicalReaction>
</comment>
<comment type="pathway">
    <text evidence="1">Carbohydrate degradation; glycolysis; D-glyceraldehyde 3-phosphate and glycerone phosphate from D-glucose: step 4/4.</text>
</comment>
<comment type="subunit">
    <text evidence="1">Tetramer.</text>
</comment>
<comment type="allergen">
    <text evidence="4">Causes an allergic reaction in human. Binds to IgE.</text>
</comment>
<comment type="miscellaneous">
    <text evidence="6">In vertebrates, three forms of this ubiquitous glycolytic enzyme are found, aldolase A in muscle, aldolase B in liver and aldolase C in brain.</text>
</comment>
<comment type="similarity">
    <text evidence="3">Belongs to the class I fructose-bisphosphate aldolase family.</text>
</comment>